<accession>P0DUM1</accession>
<proteinExistence type="evidence at protein level"/>
<feature type="chain" id="PRO_0000452915" description="Bacterial microcompartment shell vertex protein GrpN">
    <location>
        <begin position="1"/>
        <end position="89"/>
    </location>
</feature>
<feature type="domain" description="BMV" evidence="1">
    <location>
        <begin position="1"/>
        <end position="83"/>
    </location>
</feature>
<keyword id="KW-0002">3D-structure</keyword>
<keyword id="KW-1283">Bacterial microcompartment</keyword>
<name>GRPN_RHOR1</name>
<gene>
    <name evidence="3" type="primary">grpN</name>
    <name type="ordered locus">F11_04705</name>
</gene>
<evidence type="ECO:0000255" key="1">
    <source>
        <dbReference type="PROSITE-ProRule" id="PRU01280"/>
    </source>
</evidence>
<evidence type="ECO:0000269" key="2">
    <source>
    </source>
</evidence>
<evidence type="ECO:0000303" key="3">
    <source>
    </source>
</evidence>
<evidence type="ECO:0000305" key="4"/>
<evidence type="ECO:0000305" key="5">
    <source>
    </source>
</evidence>
<evidence type="ECO:0007744" key="6">
    <source>
        <dbReference type="PDB" id="4I7A"/>
    </source>
</evidence>
<sequence>MYLGKVIGTVVSTSKNESLSGTKLLVVARLTEKLIPDGSTQVVVDTVGAGNGEIVIVSCGSSARQSTGKDHSVIDAAVVGIVDTVETVN</sequence>
<dbReference type="EMBL" id="CP003046">
    <property type="protein sequence ID" value="AEO47411.1"/>
    <property type="molecule type" value="Genomic_DNA"/>
</dbReference>
<dbReference type="RefSeq" id="WP_011388667.1">
    <property type="nucleotide sequence ID" value="NC_017584.1"/>
</dbReference>
<dbReference type="PDB" id="4I7A">
    <property type="method" value="X-ray"/>
    <property type="resolution" value="3.20 A"/>
    <property type="chains" value="A/B/C/D/E=1-89"/>
</dbReference>
<dbReference type="PDBsum" id="4I7A"/>
<dbReference type="SMR" id="P0DUM1"/>
<dbReference type="KEGG" id="rrf:F11_04705"/>
<dbReference type="OrthoDB" id="196195at2"/>
<dbReference type="GO" id="GO:0031469">
    <property type="term" value="C:bacterial microcompartment"/>
    <property type="evidence" value="ECO:0007669"/>
    <property type="project" value="UniProtKB-SubCell"/>
</dbReference>
<dbReference type="CDD" id="cd01614">
    <property type="entry name" value="EutN_CcmL"/>
    <property type="match status" value="1"/>
</dbReference>
<dbReference type="Gene3D" id="2.40.50.220">
    <property type="entry name" value="EutN/Ccml"/>
    <property type="match status" value="1"/>
</dbReference>
<dbReference type="InterPro" id="IPR004992">
    <property type="entry name" value="EutN_CcmL"/>
</dbReference>
<dbReference type="InterPro" id="IPR036677">
    <property type="entry name" value="EutN_CcmL_sf"/>
</dbReference>
<dbReference type="PANTHER" id="PTHR36539:SF1">
    <property type="entry name" value="BACTERIAL MICROCOMPARTMENT SHELL VERTEX PROTEIN EUTN"/>
    <property type="match status" value="1"/>
</dbReference>
<dbReference type="PANTHER" id="PTHR36539">
    <property type="entry name" value="ETHANOLAMINE UTILIZATION PROTEIN EUTN"/>
    <property type="match status" value="1"/>
</dbReference>
<dbReference type="Pfam" id="PF03319">
    <property type="entry name" value="EutN_CcmL"/>
    <property type="match status" value="1"/>
</dbReference>
<dbReference type="SUPFAM" id="SSF159133">
    <property type="entry name" value="EutN/CcmL-like"/>
    <property type="match status" value="1"/>
</dbReference>
<dbReference type="PROSITE" id="PS51932">
    <property type="entry name" value="BMV"/>
    <property type="match status" value="1"/>
</dbReference>
<organism>
    <name type="scientific">Rhodospirillum rubrum (strain F11)</name>
    <dbReference type="NCBI Taxonomy" id="1036743"/>
    <lineage>
        <taxon>Bacteria</taxon>
        <taxon>Pseudomonadati</taxon>
        <taxon>Pseudomonadota</taxon>
        <taxon>Alphaproteobacteria</taxon>
        <taxon>Rhodospirillales</taxon>
        <taxon>Rhodospirillaceae</taxon>
        <taxon>Rhodospirillum</taxon>
    </lineage>
</organism>
<comment type="function">
    <text evidence="5">Probably forms vertices in the bacterial microcompartment (BMC) predicted to be involved in glycyl radical-based 1,2-propanediol metabolism in this organism.</text>
</comment>
<comment type="subunit">
    <text evidence="2">Homopentamer with a small central pore.</text>
</comment>
<comment type="subcellular location">
    <subcellularLocation>
        <location evidence="5">Bacterial microcompartment</location>
    </subcellularLocation>
</comment>
<comment type="similarity">
    <text evidence="4">Belongs to the CcmL/EutN family.</text>
</comment>
<reference key="1">
    <citation type="journal article" date="2012" name="J. Bacteriol.">
        <title>Identification of a new gene required for the biosynthesis of rhodoquinone in Rhodospirillum rubrum.</title>
        <authorList>
            <person name="Lonjers Z.T."/>
            <person name="Dickson E.L."/>
            <person name="Chu T.P."/>
            <person name="Kreutz J.E."/>
            <person name="Neacsu F.A."/>
            <person name="Anders K.R."/>
            <person name="Shepherd J.N."/>
        </authorList>
    </citation>
    <scope>NUCLEOTIDE SEQUENCE [LARGE SCALE GENOMIC DNA]</scope>
    <source>
        <strain>F11</strain>
    </source>
</reference>
<reference evidence="6" key="2">
    <citation type="journal article" date="2013" name="Protein Sci.">
        <title>Bacterial microcompartment shells of diverse functional types possess pentameric vertex proteins.</title>
        <authorList>
            <person name="Wheatley N.M."/>
            <person name="Gidaniyan S.D."/>
            <person name="Liu Y."/>
            <person name="Cascio D."/>
            <person name="Yeates T.O."/>
        </authorList>
    </citation>
    <scope>X-RAY CRYSTALLOGRAPHY (3.20 ANGSTROMS)</scope>
    <scope>FUNCTION</scope>
    <scope>SUBUNIT</scope>
    <source>
        <strain>F11</strain>
    </source>
</reference>
<protein>
    <recommendedName>
        <fullName evidence="3">Bacterial microcompartment shell vertex protein GrpN</fullName>
        <shortName evidence="4">BMC-P</shortName>
    </recommendedName>
</protein>